<dbReference type="EC" id="5.2.1.12"/>
<dbReference type="EMBL" id="BT036679">
    <property type="protein sequence ID" value="ACF81684.1"/>
    <property type="molecule type" value="mRNA"/>
</dbReference>
<dbReference type="RefSeq" id="NP_001132720.1">
    <property type="nucleotide sequence ID" value="NM_001139248.1"/>
</dbReference>
<dbReference type="FunCoup" id="B4FHU1">
    <property type="interactions" value="1352"/>
</dbReference>
<dbReference type="STRING" id="4577.B4FHU1"/>
<dbReference type="PaxDb" id="4577-GRMZM2G011746_P01"/>
<dbReference type="EnsemblPlants" id="Zm00001eb408760_T001">
    <property type="protein sequence ID" value="Zm00001eb408760_P001"/>
    <property type="gene ID" value="Zm00001eb408760"/>
</dbReference>
<dbReference type="GeneID" id="100194203"/>
<dbReference type="Gramene" id="Zm00001eb408760_T001">
    <property type="protein sequence ID" value="Zm00001eb408760_P001"/>
    <property type="gene ID" value="Zm00001eb408760"/>
</dbReference>
<dbReference type="KEGG" id="zma:100194203"/>
<dbReference type="MaizeGDB" id="1167525"/>
<dbReference type="eggNOG" id="ENOG502QSJ3">
    <property type="taxonomic scope" value="Eukaryota"/>
</dbReference>
<dbReference type="HOGENOM" id="CLU_063140_0_0_1"/>
<dbReference type="InParanoid" id="B4FHU1"/>
<dbReference type="OMA" id="YVLNVAW"/>
<dbReference type="OrthoDB" id="41527at2759"/>
<dbReference type="BioCyc" id="MetaCyc:MONOMER-15661"/>
<dbReference type="BRENDA" id="5.2.1.12">
    <property type="organism ID" value="6752"/>
</dbReference>
<dbReference type="Proteomes" id="UP000007305">
    <property type="component" value="Chromosome 10"/>
</dbReference>
<dbReference type="ExpressionAtlas" id="B4FHU1">
    <property type="expression patterns" value="baseline and differential"/>
</dbReference>
<dbReference type="GO" id="GO:0031969">
    <property type="term" value="C:chloroplast membrane"/>
    <property type="evidence" value="ECO:0007669"/>
    <property type="project" value="UniProtKB-SubCell"/>
</dbReference>
<dbReference type="GO" id="GO:0090471">
    <property type="term" value="F:9,15,9'-tri-cis-zeta-carotene isomerase activity"/>
    <property type="evidence" value="ECO:0007669"/>
    <property type="project" value="UniProtKB-EC"/>
</dbReference>
<dbReference type="GO" id="GO:0016120">
    <property type="term" value="P:carotene biosynthetic process"/>
    <property type="evidence" value="ECO:0007669"/>
    <property type="project" value="EnsemblPlants"/>
</dbReference>
<dbReference type="Gene3D" id="1.20.120.1630">
    <property type="match status" value="1"/>
</dbReference>
<dbReference type="InterPro" id="IPR009915">
    <property type="entry name" value="NnrU_dom"/>
</dbReference>
<dbReference type="PANTHER" id="PTHR35988">
    <property type="entry name" value="15-CIS-ZETA-CAROTENE ISOMERASE, CHLOROPLASTIC"/>
    <property type="match status" value="1"/>
</dbReference>
<dbReference type="PANTHER" id="PTHR35988:SF2">
    <property type="entry name" value="15-CIS-ZETA-CAROTENE ISOMERASE, CHLOROPLASTIC"/>
    <property type="match status" value="1"/>
</dbReference>
<dbReference type="Pfam" id="PF07298">
    <property type="entry name" value="NnrU"/>
    <property type="match status" value="1"/>
</dbReference>
<name>ZCIS_MAIZE</name>
<keyword id="KW-0150">Chloroplast</keyword>
<keyword id="KW-0413">Isomerase</keyword>
<keyword id="KW-0472">Membrane</keyword>
<keyword id="KW-0934">Plastid</keyword>
<keyword id="KW-1185">Reference proteome</keyword>
<keyword id="KW-0809">Transit peptide</keyword>
<keyword id="KW-0812">Transmembrane</keyword>
<keyword id="KW-1133">Transmembrane helix</keyword>
<sequence>MASQLRLHLAATPPLLPHRRPHLARPLCPTLNPIRAPLPPLSRVLSHARPARAVGGGIEPKEGVVAEGDESGGGPVLVGEDSAAFELKDQSVASWAYFAGILGAVLVALNVLWIDPSTGVGTKFLDAVASVSDSHEVVMLLLTIIFAVVHSGMASLRESGEKIVGERVYRVLFAGISLPLAVTTIVYFINHRYDGTQLWQVQGITGIHELLWFSSFISFFFLYPSTFNLLEVAAVDKPKLHMWETGIMRITRHPQMVGQVIWCLAHTLWIGNSVAVAASVGLISHHLFGAWNGDRRLLSRYGEAFEVLKKRTSVMPFAAIIDGRQKLPKDYHKEFFRLPYVAITMLTLGAYFAHPLMQASSYQLPW</sequence>
<protein>
    <recommendedName>
        <fullName>15-cis-zeta-carotene isomerase, chloroplastic</fullName>
        <ecNumber>5.2.1.12</ecNumber>
    </recommendedName>
</protein>
<evidence type="ECO:0000255" key="1"/>
<evidence type="ECO:0000269" key="2">
    <source>
    </source>
</evidence>
<evidence type="ECO:0000269" key="3">
    <source>
    </source>
</evidence>
<evidence type="ECO:0000305" key="4"/>
<reference key="1">
    <citation type="submission" date="2008-07" db="EMBL/GenBank/DDBJ databases">
        <title>Maize full-length cDNA project.</title>
        <authorList>
            <person name="Yu Y."/>
            <person name="Currie J."/>
            <person name="Lomeli R."/>
            <person name="Angelova A."/>
            <person name="Collura K."/>
            <person name="Wissotski M."/>
            <person name="Campos D."/>
            <person name="Kudrna D."/>
            <person name="Golser W."/>
            <person name="Ashely E."/>
            <person name="Haller K."/>
            <person name="Descour A."/>
            <person name="Fernandes J."/>
            <person name="Zuccolo A."/>
            <person name="Soderlund C."/>
            <person name="Walbot V."/>
        </authorList>
    </citation>
    <scope>NUCLEOTIDE SEQUENCE [LARGE SCALE MRNA]</scope>
    <source>
        <strain>cv. B73</strain>
    </source>
</reference>
<reference key="2">
    <citation type="journal article" date="2007" name="Plant Physiol.">
        <title>Maize Y9 encodes a product essential for 15-cis-zeta-carotene isomerization.</title>
        <authorList>
            <person name="Li F."/>
            <person name="Murillo C."/>
            <person name="Wurtzel E.T."/>
        </authorList>
    </citation>
    <scope>FUNCTION</scope>
</reference>
<reference key="3">
    <citation type="journal article" date="2010" name="Plant Physiol.">
        <title>Isolation and characterization of the Z-ISO gene encoding a missing component of carotenoid biosynthesis in plants.</title>
        <authorList>
            <person name="Chen Y."/>
            <person name="Li F."/>
            <person name="Wurtzel E.T."/>
        </authorList>
    </citation>
    <scope>FUNCTION</scope>
    <scope>CATALYTIC ACTIVITY</scope>
    <scope>TISSUE SPECIFICITY</scope>
</reference>
<comment type="function">
    <text evidence="2 3">Isomerase involved in the biosynthesis of carotenoids. Catalyzes the cis- to trans-conversion of the 15-cis-bond in 9,15,9'-tri-cis-zeta-carotene.</text>
</comment>
<comment type="catalytic activity">
    <reaction evidence="3">
        <text>9,9',15-tri-cis-zeta-carotene = 9,9'-di-cis-zeta-carotene</text>
        <dbReference type="Rhea" id="RHEA:30967"/>
        <dbReference type="ChEBI" id="CHEBI:48716"/>
        <dbReference type="ChEBI" id="CHEBI:48717"/>
        <dbReference type="EC" id="5.2.1.12"/>
    </reaction>
</comment>
<comment type="subcellular location">
    <subcellularLocation>
        <location evidence="4">Plastid</location>
        <location evidence="4">Chloroplast membrane</location>
        <topology evidence="4">Multi-pass membrane protein</topology>
    </subcellularLocation>
</comment>
<comment type="tissue specificity">
    <text evidence="3">Expressed in leaves and roots, and at lower levels in embryos and endosperm.</text>
</comment>
<accession>B4FHU1</accession>
<feature type="transit peptide" description="Chloroplast" evidence="1">
    <location>
        <begin position="1"/>
        <end position="45"/>
    </location>
</feature>
<feature type="chain" id="PRO_0000413963" description="15-cis-zeta-carotene isomerase, chloroplastic">
    <location>
        <begin position="46"/>
        <end position="366"/>
    </location>
</feature>
<feature type="transmembrane region" description="Helical" evidence="1">
    <location>
        <begin position="94"/>
        <end position="114"/>
    </location>
</feature>
<feature type="transmembrane region" description="Helical" evidence="1">
    <location>
        <begin position="136"/>
        <end position="156"/>
    </location>
</feature>
<feature type="transmembrane region" description="Helical" evidence="1">
    <location>
        <begin position="171"/>
        <end position="191"/>
    </location>
</feature>
<feature type="transmembrane region" description="Helical" evidence="1">
    <location>
        <begin position="203"/>
        <end position="223"/>
    </location>
</feature>
<feature type="transmembrane region" description="Helical" evidence="1">
    <location>
        <begin position="260"/>
        <end position="280"/>
    </location>
</feature>
<feature type="transmembrane region" description="Helical" evidence="1">
    <location>
        <begin position="338"/>
        <end position="358"/>
    </location>
</feature>
<proteinExistence type="evidence at protein level"/>
<organism>
    <name type="scientific">Zea mays</name>
    <name type="common">Maize</name>
    <dbReference type="NCBI Taxonomy" id="4577"/>
    <lineage>
        <taxon>Eukaryota</taxon>
        <taxon>Viridiplantae</taxon>
        <taxon>Streptophyta</taxon>
        <taxon>Embryophyta</taxon>
        <taxon>Tracheophyta</taxon>
        <taxon>Spermatophyta</taxon>
        <taxon>Magnoliopsida</taxon>
        <taxon>Liliopsida</taxon>
        <taxon>Poales</taxon>
        <taxon>Poaceae</taxon>
        <taxon>PACMAD clade</taxon>
        <taxon>Panicoideae</taxon>
        <taxon>Andropogonodae</taxon>
        <taxon>Andropogoneae</taxon>
        <taxon>Tripsacinae</taxon>
        <taxon>Zea</taxon>
    </lineage>
</organism>